<proteinExistence type="inferred from homology"/>
<accession>Q57LG8</accession>
<comment type="function">
    <text evidence="1">Regulates the transcription of several operons and genes involved in the biogenesis of Fe-S clusters and Fe-S-containing proteins.</text>
</comment>
<comment type="cofactor">
    <cofactor evidence="1">
        <name>[2Fe-2S] cluster</name>
        <dbReference type="ChEBI" id="CHEBI:190135"/>
    </cofactor>
    <text evidence="1">Binds 1 [2Fe-2S] cluster.</text>
</comment>
<dbReference type="EMBL" id="AE017220">
    <property type="protein sequence ID" value="AAX66444.1"/>
    <property type="molecule type" value="Genomic_DNA"/>
</dbReference>
<dbReference type="RefSeq" id="WP_001241346.1">
    <property type="nucleotide sequence ID" value="NC_006905.1"/>
</dbReference>
<dbReference type="SMR" id="Q57LG8"/>
<dbReference type="KEGG" id="sec:SCH_2538"/>
<dbReference type="HOGENOM" id="CLU_107144_0_0_6"/>
<dbReference type="Proteomes" id="UP000000538">
    <property type="component" value="Chromosome"/>
</dbReference>
<dbReference type="GO" id="GO:0005829">
    <property type="term" value="C:cytosol"/>
    <property type="evidence" value="ECO:0007669"/>
    <property type="project" value="TreeGrafter"/>
</dbReference>
<dbReference type="GO" id="GO:0051537">
    <property type="term" value="F:2 iron, 2 sulfur cluster binding"/>
    <property type="evidence" value="ECO:0007669"/>
    <property type="project" value="UniProtKB-KW"/>
</dbReference>
<dbReference type="GO" id="GO:0003700">
    <property type="term" value="F:DNA-binding transcription factor activity"/>
    <property type="evidence" value="ECO:0007669"/>
    <property type="project" value="UniProtKB-UniRule"/>
</dbReference>
<dbReference type="GO" id="GO:0003690">
    <property type="term" value="F:double-stranded DNA binding"/>
    <property type="evidence" value="ECO:0007669"/>
    <property type="project" value="UniProtKB-UniRule"/>
</dbReference>
<dbReference type="GO" id="GO:0005506">
    <property type="term" value="F:iron ion binding"/>
    <property type="evidence" value="ECO:0007669"/>
    <property type="project" value="UniProtKB-UniRule"/>
</dbReference>
<dbReference type="FunFam" id="1.10.10.10:FF:000026">
    <property type="entry name" value="HTH-type transcriptional regulator IscR"/>
    <property type="match status" value="1"/>
</dbReference>
<dbReference type="Gene3D" id="1.10.10.10">
    <property type="entry name" value="Winged helix-like DNA-binding domain superfamily/Winged helix DNA-binding domain"/>
    <property type="match status" value="1"/>
</dbReference>
<dbReference type="HAMAP" id="MF_01176">
    <property type="entry name" value="HTH_type_IscR"/>
    <property type="match status" value="1"/>
</dbReference>
<dbReference type="InterPro" id="IPR010242">
    <property type="entry name" value="TF_HTH_IscR"/>
</dbReference>
<dbReference type="InterPro" id="IPR030489">
    <property type="entry name" value="TR_Rrf2-type_CS"/>
</dbReference>
<dbReference type="InterPro" id="IPR000944">
    <property type="entry name" value="Tscrpt_reg_Rrf2"/>
</dbReference>
<dbReference type="InterPro" id="IPR036388">
    <property type="entry name" value="WH-like_DNA-bd_sf"/>
</dbReference>
<dbReference type="InterPro" id="IPR036390">
    <property type="entry name" value="WH_DNA-bd_sf"/>
</dbReference>
<dbReference type="NCBIfam" id="TIGR02010">
    <property type="entry name" value="IscR"/>
    <property type="match status" value="1"/>
</dbReference>
<dbReference type="NCBIfam" id="NF008110">
    <property type="entry name" value="PRK10857.1"/>
    <property type="match status" value="1"/>
</dbReference>
<dbReference type="NCBIfam" id="TIGR00738">
    <property type="entry name" value="rrf2_super"/>
    <property type="match status" value="1"/>
</dbReference>
<dbReference type="PANTHER" id="PTHR33221:SF5">
    <property type="entry name" value="HTH-TYPE TRANSCRIPTIONAL REGULATOR ISCR"/>
    <property type="match status" value="1"/>
</dbReference>
<dbReference type="PANTHER" id="PTHR33221">
    <property type="entry name" value="WINGED HELIX-TURN-HELIX TRANSCRIPTIONAL REGULATOR, RRF2 FAMILY"/>
    <property type="match status" value="1"/>
</dbReference>
<dbReference type="Pfam" id="PF02082">
    <property type="entry name" value="Rrf2"/>
    <property type="match status" value="1"/>
</dbReference>
<dbReference type="SUPFAM" id="SSF46785">
    <property type="entry name" value="Winged helix' DNA-binding domain"/>
    <property type="match status" value="1"/>
</dbReference>
<dbReference type="PROSITE" id="PS01332">
    <property type="entry name" value="HTH_RRF2_1"/>
    <property type="match status" value="1"/>
</dbReference>
<dbReference type="PROSITE" id="PS51197">
    <property type="entry name" value="HTH_RRF2_2"/>
    <property type="match status" value="1"/>
</dbReference>
<protein>
    <recommendedName>
        <fullName evidence="1">HTH-type transcriptional regulator IscR</fullName>
    </recommendedName>
</protein>
<evidence type="ECO:0000255" key="1">
    <source>
        <dbReference type="HAMAP-Rule" id="MF_01176"/>
    </source>
</evidence>
<reference key="1">
    <citation type="journal article" date="2005" name="Nucleic Acids Res.">
        <title>The genome sequence of Salmonella enterica serovar Choleraesuis, a highly invasive and resistant zoonotic pathogen.</title>
        <authorList>
            <person name="Chiu C.-H."/>
            <person name="Tang P."/>
            <person name="Chu C."/>
            <person name="Hu S."/>
            <person name="Bao Q."/>
            <person name="Yu J."/>
            <person name="Chou Y.-Y."/>
            <person name="Wang H.-S."/>
            <person name="Lee Y.-S."/>
        </authorList>
    </citation>
    <scope>NUCLEOTIDE SEQUENCE [LARGE SCALE GENOMIC DNA]</scope>
    <source>
        <strain>SC-B67</strain>
    </source>
</reference>
<keyword id="KW-0001">2Fe-2S</keyword>
<keyword id="KW-0010">Activator</keyword>
<keyword id="KW-0238">DNA-binding</keyword>
<keyword id="KW-0408">Iron</keyword>
<keyword id="KW-0411">Iron-sulfur</keyword>
<keyword id="KW-0479">Metal-binding</keyword>
<keyword id="KW-0678">Repressor</keyword>
<keyword id="KW-0804">Transcription</keyword>
<keyword id="KW-0805">Transcription regulation</keyword>
<feature type="chain" id="PRO_0000268922" description="HTH-type transcriptional regulator IscR">
    <location>
        <begin position="1"/>
        <end position="164"/>
    </location>
</feature>
<feature type="domain" description="HTH rrf2-type" evidence="1">
    <location>
        <begin position="2"/>
        <end position="131"/>
    </location>
</feature>
<feature type="DNA-binding region" description="H-T-H motif" evidence="1">
    <location>
        <begin position="28"/>
        <end position="51"/>
    </location>
</feature>
<feature type="binding site" evidence="1">
    <location>
        <position position="92"/>
    </location>
    <ligand>
        <name>[2Fe-2S] cluster</name>
        <dbReference type="ChEBI" id="CHEBI:190135"/>
    </ligand>
</feature>
<feature type="binding site" evidence="1">
    <location>
        <position position="98"/>
    </location>
    <ligand>
        <name>[2Fe-2S] cluster</name>
        <dbReference type="ChEBI" id="CHEBI:190135"/>
    </ligand>
</feature>
<feature type="binding site" evidence="1">
    <location>
        <position position="104"/>
    </location>
    <ligand>
        <name>[2Fe-2S] cluster</name>
        <dbReference type="ChEBI" id="CHEBI:190135"/>
    </ligand>
</feature>
<sequence>MRLTSKGRYAVTAMLDVALNSEAGPVPLADISERQGISLSYLEQLFSRLRKNGLVSSVRGPGGGYLLGKDAGSIAVGEVISAVDESVDATRCQGKGGCQGGDKCLTHALWRDLSDRLTGFLNNITLGELVNNQEVLDVSGRQHTHDAPRASGRAQDAIDVKLRA</sequence>
<name>ISCR_SALCH</name>
<organism>
    <name type="scientific">Salmonella choleraesuis (strain SC-B67)</name>
    <dbReference type="NCBI Taxonomy" id="321314"/>
    <lineage>
        <taxon>Bacteria</taxon>
        <taxon>Pseudomonadati</taxon>
        <taxon>Pseudomonadota</taxon>
        <taxon>Gammaproteobacteria</taxon>
        <taxon>Enterobacterales</taxon>
        <taxon>Enterobacteriaceae</taxon>
        <taxon>Salmonella</taxon>
    </lineage>
</organism>
<gene>
    <name evidence="1" type="primary">iscR</name>
    <name type="ordered locus">SCH_2538</name>
</gene>